<accession>Q64R94</accession>
<organism>
    <name type="scientific">Bacteroides fragilis (strain YCH46)</name>
    <dbReference type="NCBI Taxonomy" id="295405"/>
    <lineage>
        <taxon>Bacteria</taxon>
        <taxon>Pseudomonadati</taxon>
        <taxon>Bacteroidota</taxon>
        <taxon>Bacteroidia</taxon>
        <taxon>Bacteroidales</taxon>
        <taxon>Bacteroidaceae</taxon>
        <taxon>Bacteroides</taxon>
    </lineage>
</organism>
<gene>
    <name evidence="1" type="primary">tal</name>
    <name type="ordered locus">BF3242</name>
</gene>
<evidence type="ECO:0000255" key="1">
    <source>
        <dbReference type="HAMAP-Rule" id="MF_00494"/>
    </source>
</evidence>
<protein>
    <recommendedName>
        <fullName evidence="1">Probable transaldolase</fullName>
        <ecNumber evidence="1">2.2.1.2</ecNumber>
    </recommendedName>
</protein>
<sequence length="218" mass="23687">MKFFIDTANLDQIREAHDLGVLDGVTTNPSLMAKEGIKGVENQRRHYVEICNIVQGDVSAEVIATDYEGMVREGKELAALNPHIVVKVPCIADGIKAIKHFSGKGIRTNCTLVFSTGQALLAAKAGATYVSPFVGRLDDICEDGVGLVADIVRMYRFYNYPTQVLAASIRSSKHIMECVEAGADVATCPLSAIKGLMNHPLTDAGLKKFLEDYKKVNE</sequence>
<comment type="function">
    <text evidence="1">Transaldolase is important for the balance of metabolites in the pentose-phosphate pathway.</text>
</comment>
<comment type="catalytic activity">
    <reaction evidence="1">
        <text>D-sedoheptulose 7-phosphate + D-glyceraldehyde 3-phosphate = D-erythrose 4-phosphate + beta-D-fructose 6-phosphate</text>
        <dbReference type="Rhea" id="RHEA:17053"/>
        <dbReference type="ChEBI" id="CHEBI:16897"/>
        <dbReference type="ChEBI" id="CHEBI:57483"/>
        <dbReference type="ChEBI" id="CHEBI:57634"/>
        <dbReference type="ChEBI" id="CHEBI:59776"/>
        <dbReference type="EC" id="2.2.1.2"/>
    </reaction>
</comment>
<comment type="pathway">
    <text evidence="1">Carbohydrate degradation; pentose phosphate pathway; D-glyceraldehyde 3-phosphate and beta-D-fructose 6-phosphate from D-ribose 5-phosphate and D-xylulose 5-phosphate (non-oxidative stage): step 2/3.</text>
</comment>
<comment type="subcellular location">
    <subcellularLocation>
        <location evidence="1">Cytoplasm</location>
    </subcellularLocation>
</comment>
<comment type="similarity">
    <text evidence="1">Belongs to the transaldolase family. Type 3B subfamily.</text>
</comment>
<feature type="chain" id="PRO_1000126277" description="Probable transaldolase">
    <location>
        <begin position="1"/>
        <end position="218"/>
    </location>
</feature>
<feature type="active site" description="Schiff-base intermediate with substrate" evidence="1">
    <location>
        <position position="87"/>
    </location>
</feature>
<keyword id="KW-0963">Cytoplasm</keyword>
<keyword id="KW-0570">Pentose shunt</keyword>
<keyword id="KW-0704">Schiff base</keyword>
<keyword id="KW-0808">Transferase</keyword>
<dbReference type="EC" id="2.2.1.2" evidence="1"/>
<dbReference type="EMBL" id="AP006841">
    <property type="protein sequence ID" value="BAD49987.1"/>
    <property type="molecule type" value="Genomic_DNA"/>
</dbReference>
<dbReference type="RefSeq" id="YP_100521.1">
    <property type="nucleotide sequence ID" value="NC_006347.1"/>
</dbReference>
<dbReference type="SMR" id="Q64R94"/>
<dbReference type="STRING" id="295405.BF3242"/>
<dbReference type="KEGG" id="bfr:BF3242"/>
<dbReference type="PATRIC" id="fig|295405.11.peg.3112"/>
<dbReference type="HOGENOM" id="CLU_079764_0_0_10"/>
<dbReference type="OrthoDB" id="9807051at2"/>
<dbReference type="BRENDA" id="3.2.1.127">
    <property type="organism ID" value="755"/>
</dbReference>
<dbReference type="UniPathway" id="UPA00115">
    <property type="reaction ID" value="UER00414"/>
</dbReference>
<dbReference type="Proteomes" id="UP000002197">
    <property type="component" value="Chromosome"/>
</dbReference>
<dbReference type="GO" id="GO:0005737">
    <property type="term" value="C:cytoplasm"/>
    <property type="evidence" value="ECO:0007669"/>
    <property type="project" value="UniProtKB-SubCell"/>
</dbReference>
<dbReference type="GO" id="GO:0016832">
    <property type="term" value="F:aldehyde-lyase activity"/>
    <property type="evidence" value="ECO:0007669"/>
    <property type="project" value="InterPro"/>
</dbReference>
<dbReference type="GO" id="GO:0004801">
    <property type="term" value="F:transaldolase activity"/>
    <property type="evidence" value="ECO:0007669"/>
    <property type="project" value="UniProtKB-UniRule"/>
</dbReference>
<dbReference type="GO" id="GO:0005975">
    <property type="term" value="P:carbohydrate metabolic process"/>
    <property type="evidence" value="ECO:0007669"/>
    <property type="project" value="InterPro"/>
</dbReference>
<dbReference type="GO" id="GO:0006098">
    <property type="term" value="P:pentose-phosphate shunt"/>
    <property type="evidence" value="ECO:0007669"/>
    <property type="project" value="UniProtKB-UniRule"/>
</dbReference>
<dbReference type="CDD" id="cd00956">
    <property type="entry name" value="Transaldolase_FSA"/>
    <property type="match status" value="1"/>
</dbReference>
<dbReference type="FunFam" id="3.20.20.70:FF:000018">
    <property type="entry name" value="Probable transaldolase"/>
    <property type="match status" value="1"/>
</dbReference>
<dbReference type="Gene3D" id="3.20.20.70">
    <property type="entry name" value="Aldolase class I"/>
    <property type="match status" value="1"/>
</dbReference>
<dbReference type="HAMAP" id="MF_00494">
    <property type="entry name" value="Transaldolase_3b"/>
    <property type="match status" value="1"/>
</dbReference>
<dbReference type="InterPro" id="IPR013785">
    <property type="entry name" value="Aldolase_TIM"/>
</dbReference>
<dbReference type="InterPro" id="IPR001585">
    <property type="entry name" value="TAL/FSA"/>
</dbReference>
<dbReference type="InterPro" id="IPR022999">
    <property type="entry name" value="Transaldolase_3B"/>
</dbReference>
<dbReference type="InterPro" id="IPR004731">
    <property type="entry name" value="Transaldolase_3B/F6P_aldolase"/>
</dbReference>
<dbReference type="InterPro" id="IPR018225">
    <property type="entry name" value="Transaldolase_AS"/>
</dbReference>
<dbReference type="InterPro" id="IPR033919">
    <property type="entry name" value="TSA/FSA_arc/bac"/>
</dbReference>
<dbReference type="NCBIfam" id="TIGR00875">
    <property type="entry name" value="fsa_talC_mipB"/>
    <property type="match status" value="1"/>
</dbReference>
<dbReference type="PANTHER" id="PTHR10683:SF40">
    <property type="entry name" value="FRUCTOSE-6-PHOSPHATE ALDOLASE 1-RELATED"/>
    <property type="match status" value="1"/>
</dbReference>
<dbReference type="PANTHER" id="PTHR10683">
    <property type="entry name" value="TRANSALDOLASE"/>
    <property type="match status" value="1"/>
</dbReference>
<dbReference type="Pfam" id="PF00923">
    <property type="entry name" value="TAL_FSA"/>
    <property type="match status" value="1"/>
</dbReference>
<dbReference type="SUPFAM" id="SSF51569">
    <property type="entry name" value="Aldolase"/>
    <property type="match status" value="1"/>
</dbReference>
<dbReference type="PROSITE" id="PS01054">
    <property type="entry name" value="TRANSALDOLASE_1"/>
    <property type="match status" value="1"/>
</dbReference>
<name>TAL_BACFR</name>
<proteinExistence type="inferred from homology"/>
<reference key="1">
    <citation type="journal article" date="2004" name="Proc. Natl. Acad. Sci. U.S.A.">
        <title>Genomic analysis of Bacteroides fragilis reveals extensive DNA inversions regulating cell surface adaptation.</title>
        <authorList>
            <person name="Kuwahara T."/>
            <person name="Yamashita A."/>
            <person name="Hirakawa H."/>
            <person name="Nakayama H."/>
            <person name="Toh H."/>
            <person name="Okada N."/>
            <person name="Kuhara S."/>
            <person name="Hattori M."/>
            <person name="Hayashi T."/>
            <person name="Ohnishi Y."/>
        </authorList>
    </citation>
    <scope>NUCLEOTIDE SEQUENCE [LARGE SCALE GENOMIC DNA]</scope>
    <source>
        <strain>YCH46</strain>
    </source>
</reference>